<accession>A1DG72</accession>
<organism>
    <name type="scientific">Neosartorya fischeri (strain ATCC 1020 / DSM 3700 / CBS 544.65 / FGSC A1164 / JCM 1740 / NRRL 181 / WB 181)</name>
    <name type="common">Aspergillus fischerianus</name>
    <dbReference type="NCBI Taxonomy" id="331117"/>
    <lineage>
        <taxon>Eukaryota</taxon>
        <taxon>Fungi</taxon>
        <taxon>Dikarya</taxon>
        <taxon>Ascomycota</taxon>
        <taxon>Pezizomycotina</taxon>
        <taxon>Eurotiomycetes</taxon>
        <taxon>Eurotiomycetidae</taxon>
        <taxon>Eurotiales</taxon>
        <taxon>Aspergillaceae</taxon>
        <taxon>Aspergillus</taxon>
        <taxon>Aspergillus subgen. Fumigati</taxon>
    </lineage>
</organism>
<name>ATP23_NEOFI</name>
<feature type="chain" id="PRO_0000330067" description="Mitochondrial inner membrane protease atp23">
    <location>
        <begin position="1"/>
        <end position="237"/>
    </location>
</feature>
<feature type="region of interest" description="Disordered" evidence="3">
    <location>
        <begin position="1"/>
        <end position="23"/>
    </location>
</feature>
<feature type="compositionally biased region" description="Low complexity" evidence="3">
    <location>
        <begin position="1"/>
        <end position="19"/>
    </location>
</feature>
<feature type="active site" evidence="2">
    <location>
        <position position="137"/>
    </location>
</feature>
<feature type="binding site" evidence="1">
    <location>
        <position position="136"/>
    </location>
    <ligand>
        <name>a divalent metal cation</name>
        <dbReference type="ChEBI" id="CHEBI:60240"/>
        <note>catalytic</note>
    </ligand>
</feature>
<feature type="binding site" evidence="1">
    <location>
        <position position="140"/>
    </location>
    <ligand>
        <name>a divalent metal cation</name>
        <dbReference type="ChEBI" id="CHEBI:60240"/>
        <note>catalytic</note>
    </ligand>
</feature>
<protein>
    <recommendedName>
        <fullName>Mitochondrial inner membrane protease atp23</fullName>
        <ecNumber>3.4.24.-</ecNumber>
    </recommendedName>
</protein>
<gene>
    <name type="primary">atp23</name>
    <name type="ORF">NFIA_083300</name>
</gene>
<keyword id="KW-0378">Hydrolase</keyword>
<keyword id="KW-0472">Membrane</keyword>
<keyword id="KW-0479">Metal-binding</keyword>
<keyword id="KW-0482">Metalloprotease</keyword>
<keyword id="KW-0496">Mitochondrion</keyword>
<keyword id="KW-0999">Mitochondrion inner membrane</keyword>
<keyword id="KW-0645">Protease</keyword>
<keyword id="KW-1185">Reference proteome</keyword>
<dbReference type="EC" id="3.4.24.-"/>
<dbReference type="EMBL" id="DS027696">
    <property type="protein sequence ID" value="EAW18379.1"/>
    <property type="status" value="ALT_SEQ"/>
    <property type="molecule type" value="Genomic_DNA"/>
</dbReference>
<dbReference type="RefSeq" id="XP_001260276.1">
    <property type="nucleotide sequence ID" value="XM_001260275.1"/>
</dbReference>
<dbReference type="STRING" id="331117.A1DG72"/>
<dbReference type="MEROPS" id="M76.001"/>
<dbReference type="MEROPS" id="M76.002"/>
<dbReference type="GeneID" id="4586833"/>
<dbReference type="KEGG" id="nfi:NFIA_083300"/>
<dbReference type="VEuPathDB" id="FungiDB:NFIA_083300"/>
<dbReference type="eggNOG" id="KOG3314">
    <property type="taxonomic scope" value="Eukaryota"/>
</dbReference>
<dbReference type="OrthoDB" id="285308at2759"/>
<dbReference type="Proteomes" id="UP000006702">
    <property type="component" value="Unassembled WGS sequence"/>
</dbReference>
<dbReference type="GO" id="GO:0005743">
    <property type="term" value="C:mitochondrial inner membrane"/>
    <property type="evidence" value="ECO:0007669"/>
    <property type="project" value="UniProtKB-SubCell"/>
</dbReference>
<dbReference type="GO" id="GO:0046872">
    <property type="term" value="F:metal ion binding"/>
    <property type="evidence" value="ECO:0007669"/>
    <property type="project" value="UniProtKB-KW"/>
</dbReference>
<dbReference type="GO" id="GO:0004222">
    <property type="term" value="F:metalloendopeptidase activity"/>
    <property type="evidence" value="ECO:0007669"/>
    <property type="project" value="InterPro"/>
</dbReference>
<dbReference type="GO" id="GO:0034982">
    <property type="term" value="P:mitochondrial protein processing"/>
    <property type="evidence" value="ECO:0007669"/>
    <property type="project" value="TreeGrafter"/>
</dbReference>
<dbReference type="GO" id="GO:0033615">
    <property type="term" value="P:mitochondrial proton-transporting ATP synthase complex assembly"/>
    <property type="evidence" value="ECO:0007669"/>
    <property type="project" value="TreeGrafter"/>
</dbReference>
<dbReference type="InterPro" id="IPR019165">
    <property type="entry name" value="Peptidase_M76_ATP23"/>
</dbReference>
<dbReference type="PANTHER" id="PTHR21711">
    <property type="entry name" value="MITOCHONDRIAL INNER MEMBRANE PROTEASE"/>
    <property type="match status" value="1"/>
</dbReference>
<dbReference type="PANTHER" id="PTHR21711:SF0">
    <property type="entry name" value="MITOCHONDRIAL INNER MEMBRANE PROTEASE ATP23 HOMOLOG"/>
    <property type="match status" value="1"/>
</dbReference>
<dbReference type="Pfam" id="PF09768">
    <property type="entry name" value="Peptidase_M76"/>
    <property type="match status" value="1"/>
</dbReference>
<dbReference type="PROSITE" id="PS00142">
    <property type="entry name" value="ZINC_PROTEASE"/>
    <property type="match status" value="1"/>
</dbReference>
<proteinExistence type="inferred from homology"/>
<evidence type="ECO:0000250" key="1"/>
<evidence type="ECO:0000255" key="2">
    <source>
        <dbReference type="PROSITE-ProRule" id="PRU10095"/>
    </source>
</evidence>
<evidence type="ECO:0000256" key="3">
    <source>
        <dbReference type="SAM" id="MobiDB-lite"/>
    </source>
</evidence>
<evidence type="ECO:0000305" key="4"/>
<sequence length="237" mass="27530">MSDSQPGSTSSTGGKSDSGYIPGDDTWTQWRNIFAILTGKMTDEGKEQFRIARDIRNEAADCKRCEDQRDYLLQYSPIIRFLSDNIRQLGGDLSSHNIYCRRCTSRKAGGFDPEYGILLCANEMKDQGHLEDTMAHEMVHAYDHLRFKVDWTDNLRHAACTEIRASSLSGECRWAREFFRRGQWKFTQQHQECVRRRAILSVRARPGCKDEAHAEKVVNEVWDSCFRDTRPFDEIYR</sequence>
<comment type="function">
    <text evidence="1">Has a dual role in the assembly of mitochondrial ATPase. Acts as a protease that removes N-terminal residues of mitochondrial ATPase CF(0) subunit 6 at the intermembrane space side. Also involved in the correct assembly of the membrane-embedded ATPase CF(0) particle, probably mediating association of subunit 6 with the subunit 9 ring (By similarity).</text>
</comment>
<comment type="subcellular location">
    <subcellularLocation>
        <location>Mitochondrion inner membrane</location>
        <topology>Peripheral membrane protein</topology>
        <orientation>Intermembrane side</orientation>
    </subcellularLocation>
    <text evidence="1">Associates loosely with the inner membrane.</text>
</comment>
<comment type="similarity">
    <text evidence="4">Belongs to the peptidase M76 family.</text>
</comment>
<comment type="sequence caution" evidence="4">
    <conflict type="erroneous gene model prediction">
        <sequence resource="EMBL-CDS" id="EAW18379"/>
    </conflict>
</comment>
<reference key="1">
    <citation type="journal article" date="2008" name="PLoS Genet.">
        <title>Genomic islands in the pathogenic filamentous fungus Aspergillus fumigatus.</title>
        <authorList>
            <person name="Fedorova N.D."/>
            <person name="Khaldi N."/>
            <person name="Joardar V.S."/>
            <person name="Maiti R."/>
            <person name="Amedeo P."/>
            <person name="Anderson M.J."/>
            <person name="Crabtree J."/>
            <person name="Silva J.C."/>
            <person name="Badger J.H."/>
            <person name="Albarraq A."/>
            <person name="Angiuoli S."/>
            <person name="Bussey H."/>
            <person name="Bowyer P."/>
            <person name="Cotty P.J."/>
            <person name="Dyer P.S."/>
            <person name="Egan A."/>
            <person name="Galens K."/>
            <person name="Fraser-Liggett C.M."/>
            <person name="Haas B.J."/>
            <person name="Inman J.M."/>
            <person name="Kent R."/>
            <person name="Lemieux S."/>
            <person name="Malavazi I."/>
            <person name="Orvis J."/>
            <person name="Roemer T."/>
            <person name="Ronning C.M."/>
            <person name="Sundaram J.P."/>
            <person name="Sutton G."/>
            <person name="Turner G."/>
            <person name="Venter J.C."/>
            <person name="White O.R."/>
            <person name="Whitty B.R."/>
            <person name="Youngman P."/>
            <person name="Wolfe K.H."/>
            <person name="Goldman G.H."/>
            <person name="Wortman J.R."/>
            <person name="Jiang B."/>
            <person name="Denning D.W."/>
            <person name="Nierman W.C."/>
        </authorList>
    </citation>
    <scope>NUCLEOTIDE SEQUENCE [LARGE SCALE GENOMIC DNA]</scope>
    <source>
        <strain>ATCC 1020 / DSM 3700 / CBS 544.65 / FGSC A1164 / JCM 1740 / NRRL 181 / WB 181</strain>
    </source>
</reference>